<feature type="chain" id="PRO_0000111077" description="Oligoribonuclease">
    <location>
        <begin position="1"/>
        <end position="181"/>
    </location>
</feature>
<feature type="domain" description="Exonuclease" evidence="1">
    <location>
        <begin position="8"/>
        <end position="171"/>
    </location>
</feature>
<feature type="active site" evidence="1">
    <location>
        <position position="129"/>
    </location>
</feature>
<feature type="strand" evidence="2">
    <location>
        <begin position="8"/>
        <end position="18"/>
    </location>
</feature>
<feature type="turn" evidence="2">
    <location>
        <begin position="20"/>
        <end position="22"/>
    </location>
</feature>
<feature type="strand" evidence="2">
    <location>
        <begin position="25"/>
        <end position="33"/>
    </location>
</feature>
<feature type="strand" evidence="2">
    <location>
        <begin position="39"/>
        <end position="47"/>
    </location>
</feature>
<feature type="helix" evidence="2">
    <location>
        <begin position="52"/>
        <end position="55"/>
    </location>
</feature>
<feature type="helix" evidence="2">
    <location>
        <begin position="60"/>
        <end position="68"/>
    </location>
</feature>
<feature type="helix" evidence="2">
    <location>
        <begin position="71"/>
        <end position="77"/>
    </location>
</feature>
<feature type="helix" evidence="2">
    <location>
        <begin position="82"/>
        <end position="93"/>
    </location>
</feature>
<feature type="turn" evidence="2">
    <location>
        <begin position="94"/>
        <end position="96"/>
    </location>
</feature>
<feature type="turn" evidence="2">
    <location>
        <begin position="99"/>
        <end position="101"/>
    </location>
</feature>
<feature type="strand" evidence="2">
    <location>
        <begin position="104"/>
        <end position="108"/>
    </location>
</feature>
<feature type="helix" evidence="2">
    <location>
        <begin position="109"/>
        <end position="119"/>
    </location>
</feature>
<feature type="helix" evidence="2">
    <location>
        <begin position="121"/>
        <end position="124"/>
    </location>
</feature>
<feature type="strand" evidence="2">
    <location>
        <begin position="131"/>
        <end position="133"/>
    </location>
</feature>
<feature type="helix" evidence="2">
    <location>
        <begin position="134"/>
        <end position="144"/>
    </location>
</feature>
<feature type="helix" evidence="2">
    <location>
        <begin position="146"/>
        <end position="151"/>
    </location>
</feature>
<feature type="helix" evidence="2">
    <location>
        <begin position="160"/>
        <end position="177"/>
    </location>
</feature>
<dbReference type="EC" id="3.1.15.-" evidence="1"/>
<dbReference type="EMBL" id="AE003852">
    <property type="protein sequence ID" value="AAF93514.1"/>
    <property type="molecule type" value="Genomic_DNA"/>
</dbReference>
<dbReference type="PIR" id="E82333">
    <property type="entry name" value="E82333"/>
</dbReference>
<dbReference type="RefSeq" id="NP_229995.1">
    <property type="nucleotide sequence ID" value="NC_002505.1"/>
</dbReference>
<dbReference type="RefSeq" id="WP_000010183.1">
    <property type="nucleotide sequence ID" value="NZ_LT906614.1"/>
</dbReference>
<dbReference type="PDB" id="6N6D">
    <property type="method" value="X-ray"/>
    <property type="resolution" value="1.53 A"/>
    <property type="chains" value="A=1-181"/>
</dbReference>
<dbReference type="PDB" id="6N6E">
    <property type="method" value="X-ray"/>
    <property type="resolution" value="1.58 A"/>
    <property type="chains" value="A=1-181"/>
</dbReference>
<dbReference type="PDB" id="6N6F">
    <property type="method" value="X-ray"/>
    <property type="resolution" value="1.74 A"/>
    <property type="chains" value="A=1-181"/>
</dbReference>
<dbReference type="PDB" id="6N6G">
    <property type="method" value="X-ray"/>
    <property type="resolution" value="2.02 A"/>
    <property type="chains" value="A=1-181"/>
</dbReference>
<dbReference type="PDB" id="6N6H">
    <property type="method" value="X-ray"/>
    <property type="resolution" value="1.76 A"/>
    <property type="chains" value="A=1-181"/>
</dbReference>
<dbReference type="PDB" id="7V5H">
    <property type="method" value="X-ray"/>
    <property type="resolution" value="1.70 A"/>
    <property type="chains" value="A=1-181"/>
</dbReference>
<dbReference type="PDBsum" id="6N6D"/>
<dbReference type="PDBsum" id="6N6E"/>
<dbReference type="PDBsum" id="6N6F"/>
<dbReference type="PDBsum" id="6N6G"/>
<dbReference type="PDBsum" id="6N6H"/>
<dbReference type="PDBsum" id="7V5H"/>
<dbReference type="SMR" id="Q9KV17"/>
<dbReference type="STRING" id="243277.VC_0341"/>
<dbReference type="DNASU" id="2615077"/>
<dbReference type="EnsemblBacteria" id="AAF93514">
    <property type="protein sequence ID" value="AAF93514"/>
    <property type="gene ID" value="VC_0341"/>
</dbReference>
<dbReference type="KEGG" id="vch:VC_0341"/>
<dbReference type="PATRIC" id="fig|243277.26.peg.318"/>
<dbReference type="eggNOG" id="COG1949">
    <property type="taxonomic scope" value="Bacteria"/>
</dbReference>
<dbReference type="HOGENOM" id="CLU_064761_2_0_6"/>
<dbReference type="Proteomes" id="UP000000584">
    <property type="component" value="Chromosome 1"/>
</dbReference>
<dbReference type="GO" id="GO:0005737">
    <property type="term" value="C:cytoplasm"/>
    <property type="evidence" value="ECO:0007669"/>
    <property type="project" value="UniProtKB-SubCell"/>
</dbReference>
<dbReference type="GO" id="GO:0000175">
    <property type="term" value="F:3'-5'-RNA exonuclease activity"/>
    <property type="evidence" value="ECO:0007669"/>
    <property type="project" value="InterPro"/>
</dbReference>
<dbReference type="GO" id="GO:0003676">
    <property type="term" value="F:nucleic acid binding"/>
    <property type="evidence" value="ECO:0007669"/>
    <property type="project" value="InterPro"/>
</dbReference>
<dbReference type="GO" id="GO:0006259">
    <property type="term" value="P:DNA metabolic process"/>
    <property type="evidence" value="ECO:0007669"/>
    <property type="project" value="UniProtKB-ARBA"/>
</dbReference>
<dbReference type="CDD" id="cd06135">
    <property type="entry name" value="Orn"/>
    <property type="match status" value="1"/>
</dbReference>
<dbReference type="FunFam" id="3.30.420.10:FF:000003">
    <property type="entry name" value="Oligoribonuclease"/>
    <property type="match status" value="1"/>
</dbReference>
<dbReference type="Gene3D" id="3.30.420.10">
    <property type="entry name" value="Ribonuclease H-like superfamily/Ribonuclease H"/>
    <property type="match status" value="1"/>
</dbReference>
<dbReference type="HAMAP" id="MF_00045">
    <property type="entry name" value="Oligoribonuclease"/>
    <property type="match status" value="1"/>
</dbReference>
<dbReference type="InterPro" id="IPR013520">
    <property type="entry name" value="Exonuclease_RNaseT/DNA_pol3"/>
</dbReference>
<dbReference type="InterPro" id="IPR022894">
    <property type="entry name" value="Oligoribonuclease"/>
</dbReference>
<dbReference type="InterPro" id="IPR012337">
    <property type="entry name" value="RNaseH-like_sf"/>
</dbReference>
<dbReference type="InterPro" id="IPR036397">
    <property type="entry name" value="RNaseH_sf"/>
</dbReference>
<dbReference type="NCBIfam" id="NF003765">
    <property type="entry name" value="PRK05359.1"/>
    <property type="match status" value="1"/>
</dbReference>
<dbReference type="PANTHER" id="PTHR11046">
    <property type="entry name" value="OLIGORIBONUCLEASE, MITOCHONDRIAL"/>
    <property type="match status" value="1"/>
</dbReference>
<dbReference type="PANTHER" id="PTHR11046:SF0">
    <property type="entry name" value="OLIGORIBONUCLEASE, MITOCHONDRIAL"/>
    <property type="match status" value="1"/>
</dbReference>
<dbReference type="Pfam" id="PF00929">
    <property type="entry name" value="RNase_T"/>
    <property type="match status" value="1"/>
</dbReference>
<dbReference type="SMART" id="SM00479">
    <property type="entry name" value="EXOIII"/>
    <property type="match status" value="1"/>
</dbReference>
<dbReference type="SUPFAM" id="SSF53098">
    <property type="entry name" value="Ribonuclease H-like"/>
    <property type="match status" value="1"/>
</dbReference>
<proteinExistence type="evidence at protein level"/>
<organism>
    <name type="scientific">Vibrio cholerae serotype O1 (strain ATCC 39315 / El Tor Inaba N16961)</name>
    <dbReference type="NCBI Taxonomy" id="243277"/>
    <lineage>
        <taxon>Bacteria</taxon>
        <taxon>Pseudomonadati</taxon>
        <taxon>Pseudomonadota</taxon>
        <taxon>Gammaproteobacteria</taxon>
        <taxon>Vibrionales</taxon>
        <taxon>Vibrionaceae</taxon>
        <taxon>Vibrio</taxon>
    </lineage>
</organism>
<reference key="1">
    <citation type="journal article" date="2000" name="Nature">
        <title>DNA sequence of both chromosomes of the cholera pathogen Vibrio cholerae.</title>
        <authorList>
            <person name="Heidelberg J.F."/>
            <person name="Eisen J.A."/>
            <person name="Nelson W.C."/>
            <person name="Clayton R.A."/>
            <person name="Gwinn M.L."/>
            <person name="Dodson R.J."/>
            <person name="Haft D.H."/>
            <person name="Hickey E.K."/>
            <person name="Peterson J.D."/>
            <person name="Umayam L.A."/>
            <person name="Gill S.R."/>
            <person name="Nelson K.E."/>
            <person name="Read T.D."/>
            <person name="Tettelin H."/>
            <person name="Richardson D.L."/>
            <person name="Ermolaeva M.D."/>
            <person name="Vamathevan J.J."/>
            <person name="Bass S."/>
            <person name="Qin H."/>
            <person name="Dragoi I."/>
            <person name="Sellers P."/>
            <person name="McDonald L.A."/>
            <person name="Utterback T.R."/>
            <person name="Fleischmann R.D."/>
            <person name="Nierman W.C."/>
            <person name="White O."/>
            <person name="Salzberg S.L."/>
            <person name="Smith H.O."/>
            <person name="Colwell R.R."/>
            <person name="Mekalanos J.J."/>
            <person name="Venter J.C."/>
            <person name="Fraser C.M."/>
        </authorList>
    </citation>
    <scope>NUCLEOTIDE SEQUENCE [LARGE SCALE GENOMIC DNA]</scope>
    <source>
        <strain>ATCC 39315 / El Tor Inaba N16961</strain>
    </source>
</reference>
<name>ORN_VIBCH</name>
<gene>
    <name evidence="1" type="primary">orn</name>
    <name type="ordered locus">VC_0341</name>
</gene>
<keyword id="KW-0002">3D-structure</keyword>
<keyword id="KW-0963">Cytoplasm</keyword>
<keyword id="KW-0269">Exonuclease</keyword>
<keyword id="KW-0378">Hydrolase</keyword>
<keyword id="KW-0540">Nuclease</keyword>
<keyword id="KW-1185">Reference proteome</keyword>
<evidence type="ECO:0000255" key="1">
    <source>
        <dbReference type="HAMAP-Rule" id="MF_00045"/>
    </source>
</evidence>
<evidence type="ECO:0007829" key="2">
    <source>
        <dbReference type="PDB" id="6N6D"/>
    </source>
</evidence>
<protein>
    <recommendedName>
        <fullName evidence="1">Oligoribonuclease</fullName>
        <ecNumber evidence="1">3.1.15.-</ecNumber>
    </recommendedName>
</protein>
<accession>Q9KV17</accession>
<sequence>MSFSDQNLIWIDLEMTGLDPEMHKIIEMATIVTDSELNILAEGPVIAIHQPESELAKMDEWCTTTHTASGLVARVRQSQVSEEEAIDQTLAFLKQWVPEGKSPICGNSIGQDRRFLYKHMPRLEAYFHYRYIDVSTIKELTRRWQPEVLKEFSKTGSHLALDDIRESIAELQFYRKAVFKI</sequence>
<comment type="function">
    <text evidence="1">3'-to-5' exoribonuclease specific for small oligoribonucleotides.</text>
</comment>
<comment type="subcellular location">
    <subcellularLocation>
        <location evidence="1">Cytoplasm</location>
    </subcellularLocation>
</comment>
<comment type="similarity">
    <text evidence="1">Belongs to the oligoribonuclease family.</text>
</comment>